<reference key="1">
    <citation type="journal article" date="2002" name="Nucleic Acids Res.">
        <title>Genome sequence of Oceanobacillus iheyensis isolated from the Iheya Ridge and its unexpected adaptive capabilities to extreme environments.</title>
        <authorList>
            <person name="Takami H."/>
            <person name="Takaki Y."/>
            <person name="Uchiyama I."/>
        </authorList>
    </citation>
    <scope>NUCLEOTIDE SEQUENCE [LARGE SCALE GENOMIC DNA]</scope>
    <source>
        <strain>DSM 14371 / CIP 107618 / JCM 11309 / KCTC 3954 / HTE831</strain>
    </source>
</reference>
<gene>
    <name evidence="1" type="primary">ezrA</name>
    <name type="ordered locus">OB2200</name>
</gene>
<name>EZRA_OCEIH</name>
<organism>
    <name type="scientific">Oceanobacillus iheyensis (strain DSM 14371 / CIP 107618 / JCM 11309 / KCTC 3954 / HTE831)</name>
    <dbReference type="NCBI Taxonomy" id="221109"/>
    <lineage>
        <taxon>Bacteria</taxon>
        <taxon>Bacillati</taxon>
        <taxon>Bacillota</taxon>
        <taxon>Bacilli</taxon>
        <taxon>Bacillales</taxon>
        <taxon>Bacillaceae</taxon>
        <taxon>Oceanobacillus</taxon>
    </lineage>
</organism>
<comment type="function">
    <text evidence="1">Negative regulator of FtsZ ring formation; modulates the frequency and position of FtsZ ring formation. Inhibits FtsZ ring formation at polar sites. Interacts either with FtsZ or with one of its binding partners to promote depolymerization.</text>
</comment>
<comment type="subcellular location">
    <subcellularLocation>
        <location>Cell membrane</location>
        <topology>Single-pass membrane protein</topology>
    </subcellularLocation>
    <text evidence="1">Colocalized with FtsZ to the nascent septal site.</text>
</comment>
<comment type="similarity">
    <text evidence="1">Belongs to the EzrA family.</text>
</comment>
<accession>Q8EPB2</accession>
<keyword id="KW-0131">Cell cycle</keyword>
<keyword id="KW-0132">Cell division</keyword>
<keyword id="KW-1003">Cell membrane</keyword>
<keyword id="KW-0175">Coiled coil</keyword>
<keyword id="KW-0472">Membrane</keyword>
<keyword id="KW-1185">Reference proteome</keyword>
<keyword id="KW-0717">Septation</keyword>
<keyword id="KW-0812">Transmembrane</keyword>
<keyword id="KW-1133">Transmembrane helix</keyword>
<dbReference type="EMBL" id="BA000028">
    <property type="protein sequence ID" value="BAC14156.1"/>
    <property type="molecule type" value="Genomic_DNA"/>
</dbReference>
<dbReference type="RefSeq" id="WP_011066594.1">
    <property type="nucleotide sequence ID" value="NC_004193.1"/>
</dbReference>
<dbReference type="SMR" id="Q8EPB2"/>
<dbReference type="STRING" id="221109.gene:10734448"/>
<dbReference type="KEGG" id="oih:OB2200"/>
<dbReference type="eggNOG" id="COG4477">
    <property type="taxonomic scope" value="Bacteria"/>
</dbReference>
<dbReference type="HOGENOM" id="CLU_034079_1_0_9"/>
<dbReference type="OrthoDB" id="1654473at2"/>
<dbReference type="PhylomeDB" id="Q8EPB2"/>
<dbReference type="Proteomes" id="UP000000822">
    <property type="component" value="Chromosome"/>
</dbReference>
<dbReference type="GO" id="GO:0005886">
    <property type="term" value="C:plasma membrane"/>
    <property type="evidence" value="ECO:0007669"/>
    <property type="project" value="UniProtKB-SubCell"/>
</dbReference>
<dbReference type="GO" id="GO:0005940">
    <property type="term" value="C:septin ring"/>
    <property type="evidence" value="ECO:0007669"/>
    <property type="project" value="InterPro"/>
</dbReference>
<dbReference type="GO" id="GO:0000917">
    <property type="term" value="P:division septum assembly"/>
    <property type="evidence" value="ECO:0007669"/>
    <property type="project" value="UniProtKB-KW"/>
</dbReference>
<dbReference type="GO" id="GO:0000921">
    <property type="term" value="P:septin ring assembly"/>
    <property type="evidence" value="ECO:0007669"/>
    <property type="project" value="InterPro"/>
</dbReference>
<dbReference type="HAMAP" id="MF_00728">
    <property type="entry name" value="EzrA"/>
    <property type="match status" value="1"/>
</dbReference>
<dbReference type="InterPro" id="IPR010379">
    <property type="entry name" value="EzrA"/>
</dbReference>
<dbReference type="NCBIfam" id="NF003413">
    <property type="entry name" value="PRK04778.1-7"/>
    <property type="match status" value="1"/>
</dbReference>
<dbReference type="Pfam" id="PF06160">
    <property type="entry name" value="EzrA"/>
    <property type="match status" value="1"/>
</dbReference>
<evidence type="ECO:0000255" key="1">
    <source>
        <dbReference type="HAMAP-Rule" id="MF_00728"/>
    </source>
</evidence>
<sequence>MVFVISVILAIIVILTIGLILRKRIYDKVDHQEKWKMDIMARDVAQQISKIKSLNLSGETQEKFELWKGRWEHIITKELPDIEDHLFDAEDAADKFRMKRANNILTEGDQKLQNIEVKIEEILEELDELLSSEKTSREEVAQIVPTIKLLRKTLSQSRYQYGKAEKFFDKKLDEFDTQLATYEDNVESGDYLEANRLIQVLKEEIAEFEIKMEQFPEILRRCKQDLPSQLEQVLAGLQEMKNDGYRVKHFGFDKEIITYQDQLKNLQQQIEQGDITDVSTKLDEIEERITEMYESLEGEAIAKNYLEQRIPEYEKSISEIAATYDDTKLEVEELQKAYFVENNDMERFFTIGKTISTLREQLKELHKEMDDDQKSHSDLQNIVEDGFDKIEQLEEQHEEFKKSIENLRKDEMEAREKLIEMRRQLYELNRKIKKSNIPGVPGFIWTRFETASAKNSQVVDVLEDYPLDIAKVQHALSEAKQAVDQTHEQIDIMLDQAYLTEQVIQYANRYRSQQPDLNGKLKEAERLFRNYEYELSLEHAAKAIEEIEPGALKRIEENQLTLNR</sequence>
<feature type="chain" id="PRO_0000172877" description="Septation ring formation regulator EzrA">
    <location>
        <begin position="1"/>
        <end position="564"/>
    </location>
</feature>
<feature type="topological domain" description="Extracellular" evidence="1">
    <location>
        <begin position="1"/>
        <end position="2"/>
    </location>
</feature>
<feature type="transmembrane region" description="Helical" evidence="1">
    <location>
        <begin position="3"/>
        <end position="21"/>
    </location>
</feature>
<feature type="topological domain" description="Cytoplasmic" evidence="1">
    <location>
        <begin position="22"/>
        <end position="564"/>
    </location>
</feature>
<feature type="coiled-coil region" evidence="1">
    <location>
        <begin position="101"/>
        <end position="140"/>
    </location>
</feature>
<feature type="coiled-coil region" evidence="1">
    <location>
        <begin position="168"/>
        <end position="215"/>
    </location>
</feature>
<feature type="coiled-coil region" evidence="1">
    <location>
        <begin position="251"/>
        <end position="436"/>
    </location>
</feature>
<feature type="coiled-coil region" evidence="1">
    <location>
        <begin position="468"/>
        <end position="537"/>
    </location>
</feature>
<protein>
    <recommendedName>
        <fullName evidence="1">Septation ring formation regulator EzrA</fullName>
    </recommendedName>
</protein>
<proteinExistence type="inferred from homology"/>